<accession>P20161</accession>
<dbReference type="EC" id="1.8.2.3"/>
<dbReference type="SMR" id="P20161"/>
<dbReference type="GO" id="GO:0042597">
    <property type="term" value="C:periplasmic space"/>
    <property type="evidence" value="ECO:0007669"/>
    <property type="project" value="UniProtKB-SubCell"/>
</dbReference>
<dbReference type="GO" id="GO:0070225">
    <property type="term" value="F:sulfide dehydrogenase activity"/>
    <property type="evidence" value="ECO:0007669"/>
    <property type="project" value="UniProtKB-EC"/>
</dbReference>
<dbReference type="Gene3D" id="3.50.50.60">
    <property type="entry name" value="FAD/NAD(P)-binding domain"/>
    <property type="match status" value="1"/>
</dbReference>
<dbReference type="InterPro" id="IPR036188">
    <property type="entry name" value="FAD/NAD-bd_sf"/>
</dbReference>
<dbReference type="InterPro" id="IPR023753">
    <property type="entry name" value="FAD/NAD-binding_dom"/>
</dbReference>
<dbReference type="Pfam" id="PF07992">
    <property type="entry name" value="Pyr_redox_2"/>
    <property type="match status" value="1"/>
</dbReference>
<dbReference type="SUPFAM" id="SSF51905">
    <property type="entry name" value="FAD/NAD(P)-binding domain"/>
    <property type="match status" value="1"/>
</dbReference>
<reference key="1">
    <citation type="journal article" date="1990" name="J. Biol. Chem.">
        <title>Complete amino acid sequence of the cytochrome subunit and amino-terminal sequence of the flavin subunit of flavocytochrome c (sulfide dehydrogenase) from Chlorobium thiosulfatophilum.</title>
        <authorList>
            <person name="van Beeumen J."/>
            <person name="van Bun S."/>
            <person name="Meyer T.E."/>
            <person name="Bartsch R.G."/>
            <person name="Cusanovich M.A."/>
        </authorList>
    </citation>
    <scope>PROTEIN SEQUENCE</scope>
    <source>
        <strain>DSM 249 / 6230 / Tassajara</strain>
    </source>
</reference>
<reference key="2">
    <citation type="journal article" date="1977" name="Biochim. Biophys. Acta">
        <title>Structure of the covalently bound flavin of Chlorobium cytochrome.</title>
        <authorList>
            <person name="Kenney W.C."/>
            <person name="McIntire W."/>
            <person name="Yamanaka T."/>
        </authorList>
    </citation>
    <scope>PROTEIN SEQUENCE OF 40-46</scope>
</reference>
<keyword id="KW-0903">Direct protein sequencing</keyword>
<keyword id="KW-0274">FAD</keyword>
<keyword id="KW-0285">Flavoprotein</keyword>
<keyword id="KW-0560">Oxidoreductase</keyword>
<keyword id="KW-0574">Periplasm</keyword>
<organism>
    <name type="scientific">Chlorobaculum thiosulfatiphilum</name>
    <name type="common">Chlorobium limicola f.sp. thiosulfatophilum</name>
    <dbReference type="NCBI Taxonomy" id="115852"/>
    <lineage>
        <taxon>Bacteria</taxon>
        <taxon>Pseudomonadati</taxon>
        <taxon>Chlorobiota</taxon>
        <taxon>Chlorobiia</taxon>
        <taxon>Chlorobiales</taxon>
        <taxon>Chlorobiaceae</taxon>
        <taxon>Chlorobaculum</taxon>
    </lineage>
</organism>
<proteinExistence type="evidence at protein level"/>
<protein>
    <recommendedName>
        <fullName>Sulfide dehydrogenase [flavocytochrome c] flavoprotein chain</fullName>
        <ecNumber>1.8.2.3</ecNumber>
    </recommendedName>
    <alternativeName>
        <fullName>FCSD</fullName>
    </alternativeName>
    <alternativeName>
        <fullName>Flavocytochrome c flavoprotein subunit</fullName>
        <shortName>FC</shortName>
    </alternativeName>
</protein>
<comment type="catalytic activity">
    <reaction>
        <text>hydrogen sulfide + 2 Fe(III)-[cytochrome c] = sulfur + 2 Fe(II)-[cytochrome c] + H(+)</text>
        <dbReference type="Rhea" id="RHEA:30223"/>
        <dbReference type="Rhea" id="RHEA-COMP:10350"/>
        <dbReference type="Rhea" id="RHEA-COMP:14399"/>
        <dbReference type="ChEBI" id="CHEBI:15378"/>
        <dbReference type="ChEBI" id="CHEBI:26833"/>
        <dbReference type="ChEBI" id="CHEBI:29033"/>
        <dbReference type="ChEBI" id="CHEBI:29034"/>
        <dbReference type="ChEBI" id="CHEBI:29919"/>
        <dbReference type="EC" id="1.8.2.3"/>
    </reaction>
</comment>
<comment type="subunit">
    <text>Dimer of one cytochrome and one flavoprotein.</text>
</comment>
<comment type="subcellular location">
    <subcellularLocation>
        <location>Periplasm</location>
    </subcellularLocation>
</comment>
<feature type="chain" id="PRO_0000079894" description="Sulfide dehydrogenase [flavocytochrome c] flavoprotein chain">
    <location>
        <begin position="1"/>
        <end position="48" status="greater than"/>
    </location>
</feature>
<feature type="binding site">
    <location>
        <begin position="40"/>
        <end position="46"/>
    </location>
    <ligand>
        <name>FAD</name>
        <dbReference type="ChEBI" id="CHEBI:57692"/>
    </ligand>
</feature>
<feature type="non-terminal residue">
    <location>
        <position position="48"/>
    </location>
</feature>
<name>DHSU_CHLTI</name>
<sequence length="48" mass="4927">GTKRVVVVGGGFGGASTAKYLRKLDPSISVTLVEPKTAFVTCPFSNAV</sequence>